<protein>
    <recommendedName>
        <fullName evidence="1">Cell division topological specificity factor</fullName>
    </recommendedName>
</protein>
<accession>B6EIV6</accession>
<name>MINE_ALISL</name>
<keyword id="KW-0131">Cell cycle</keyword>
<keyword id="KW-0132">Cell division</keyword>
<organism>
    <name type="scientific">Aliivibrio salmonicida (strain LFI1238)</name>
    <name type="common">Vibrio salmonicida (strain LFI1238)</name>
    <dbReference type="NCBI Taxonomy" id="316275"/>
    <lineage>
        <taxon>Bacteria</taxon>
        <taxon>Pseudomonadati</taxon>
        <taxon>Pseudomonadota</taxon>
        <taxon>Gammaproteobacteria</taxon>
        <taxon>Vibrionales</taxon>
        <taxon>Vibrionaceae</taxon>
        <taxon>Aliivibrio</taxon>
    </lineage>
</organism>
<dbReference type="EMBL" id="FM178379">
    <property type="protein sequence ID" value="CAQ78750.1"/>
    <property type="molecule type" value="Genomic_DNA"/>
</dbReference>
<dbReference type="RefSeq" id="WP_012549820.1">
    <property type="nucleotide sequence ID" value="NC_011312.1"/>
</dbReference>
<dbReference type="SMR" id="B6EIV6"/>
<dbReference type="KEGG" id="vsa:VSAL_I1065"/>
<dbReference type="eggNOG" id="COG0851">
    <property type="taxonomic scope" value="Bacteria"/>
</dbReference>
<dbReference type="HOGENOM" id="CLU_137929_2_2_6"/>
<dbReference type="Proteomes" id="UP000001730">
    <property type="component" value="Chromosome 1"/>
</dbReference>
<dbReference type="GO" id="GO:0051301">
    <property type="term" value="P:cell division"/>
    <property type="evidence" value="ECO:0007669"/>
    <property type="project" value="UniProtKB-KW"/>
</dbReference>
<dbReference type="GO" id="GO:0032955">
    <property type="term" value="P:regulation of division septum assembly"/>
    <property type="evidence" value="ECO:0007669"/>
    <property type="project" value="InterPro"/>
</dbReference>
<dbReference type="FunFam" id="3.30.1070.10:FF:000001">
    <property type="entry name" value="Cell division topological specificity factor"/>
    <property type="match status" value="1"/>
</dbReference>
<dbReference type="Gene3D" id="3.30.1070.10">
    <property type="entry name" value="Cell division topological specificity factor MinE"/>
    <property type="match status" value="1"/>
</dbReference>
<dbReference type="HAMAP" id="MF_00262">
    <property type="entry name" value="MinE"/>
    <property type="match status" value="1"/>
</dbReference>
<dbReference type="InterPro" id="IPR005527">
    <property type="entry name" value="MinE"/>
</dbReference>
<dbReference type="InterPro" id="IPR036707">
    <property type="entry name" value="MinE_sf"/>
</dbReference>
<dbReference type="NCBIfam" id="TIGR01215">
    <property type="entry name" value="minE"/>
    <property type="match status" value="1"/>
</dbReference>
<dbReference type="NCBIfam" id="NF001422">
    <property type="entry name" value="PRK00296.1"/>
    <property type="match status" value="1"/>
</dbReference>
<dbReference type="Pfam" id="PF03776">
    <property type="entry name" value="MinE"/>
    <property type="match status" value="1"/>
</dbReference>
<dbReference type="SUPFAM" id="SSF55229">
    <property type="entry name" value="Cell division protein MinE topological specificity domain"/>
    <property type="match status" value="1"/>
</dbReference>
<comment type="function">
    <text evidence="1">Prevents the cell division inhibition by proteins MinC and MinD at internal division sites while permitting inhibition at polar sites. This ensures cell division at the proper site by restricting the formation of a division septum at the midpoint of the long axis of the cell.</text>
</comment>
<comment type="similarity">
    <text evidence="1">Belongs to the MinE family.</text>
</comment>
<feature type="chain" id="PRO_1000114199" description="Cell division topological specificity factor">
    <location>
        <begin position="1"/>
        <end position="86"/>
    </location>
</feature>
<sequence>MALLEFFRPQKKATANIAKERLQIIVAERRNGGPAPSYLPQLKEDILKVISKYVNVSPDMITVSLEQKEEDLSVLELNITLPEDDN</sequence>
<reference key="1">
    <citation type="journal article" date="2008" name="BMC Genomics">
        <title>The genome sequence of the fish pathogen Aliivibrio salmonicida strain LFI1238 shows extensive evidence of gene decay.</title>
        <authorList>
            <person name="Hjerde E."/>
            <person name="Lorentzen M.S."/>
            <person name="Holden M.T."/>
            <person name="Seeger K."/>
            <person name="Paulsen S."/>
            <person name="Bason N."/>
            <person name="Churcher C."/>
            <person name="Harris D."/>
            <person name="Norbertczak H."/>
            <person name="Quail M.A."/>
            <person name="Sanders S."/>
            <person name="Thurston S."/>
            <person name="Parkhill J."/>
            <person name="Willassen N.P."/>
            <person name="Thomson N.R."/>
        </authorList>
    </citation>
    <scope>NUCLEOTIDE SEQUENCE [LARGE SCALE GENOMIC DNA]</scope>
    <source>
        <strain>LFI1238</strain>
    </source>
</reference>
<evidence type="ECO:0000255" key="1">
    <source>
        <dbReference type="HAMAP-Rule" id="MF_00262"/>
    </source>
</evidence>
<gene>
    <name evidence="1" type="primary">minE</name>
    <name type="ordered locus">VSAL_I1065</name>
</gene>
<proteinExistence type="inferred from homology"/>